<evidence type="ECO:0000255" key="1"/>
<evidence type="ECO:0000305" key="2"/>
<dbReference type="EMBL" id="U00007">
    <property type="protein sequence ID" value="AAA60511.1"/>
    <property type="molecule type" value="Genomic_DNA"/>
</dbReference>
<dbReference type="EMBL" id="U00096">
    <property type="protein sequence ID" value="AAC75219.1"/>
    <property type="molecule type" value="Genomic_DNA"/>
</dbReference>
<dbReference type="EMBL" id="AP009048">
    <property type="protein sequence ID" value="BAE76635.1"/>
    <property type="molecule type" value="Genomic_DNA"/>
</dbReference>
<dbReference type="PIR" id="E64984">
    <property type="entry name" value="E64984"/>
</dbReference>
<dbReference type="RefSeq" id="NP_416663.1">
    <property type="nucleotide sequence ID" value="NC_000913.3"/>
</dbReference>
<dbReference type="RefSeq" id="WP_000182053.1">
    <property type="nucleotide sequence ID" value="NZ_STEB01000002.1"/>
</dbReference>
<dbReference type="PDB" id="7N2O">
    <property type="method" value="X-ray"/>
    <property type="resolution" value="2.30 A"/>
    <property type="chains" value="C=232-240"/>
</dbReference>
<dbReference type="PDB" id="7N2Q">
    <property type="method" value="X-ray"/>
    <property type="resolution" value="2.70 A"/>
    <property type="chains" value="C/J=232-240"/>
</dbReference>
<dbReference type="PDB" id="8CX4">
    <property type="method" value="X-ray"/>
    <property type="resolution" value="2.20 A"/>
    <property type="chains" value="C=232-240"/>
</dbReference>
<dbReference type="PDBsum" id="7N2O"/>
<dbReference type="PDBsum" id="7N2Q"/>
<dbReference type="PDBsum" id="8CX4"/>
<dbReference type="SMR" id="P62723"/>
<dbReference type="BioGRID" id="4261798">
    <property type="interactions" value="147"/>
</dbReference>
<dbReference type="FunCoup" id="P62723">
    <property type="interactions" value="126"/>
</dbReference>
<dbReference type="STRING" id="511145.b2158"/>
<dbReference type="TCDB" id="2.A.98.1.3">
    <property type="family name" value="the putative sulfate exporter (pse) family"/>
</dbReference>
<dbReference type="PaxDb" id="511145-b2158"/>
<dbReference type="EnsemblBacteria" id="AAC75219">
    <property type="protein sequence ID" value="AAC75219"/>
    <property type="gene ID" value="b2158"/>
</dbReference>
<dbReference type="GeneID" id="946668"/>
<dbReference type="KEGG" id="ecj:JW2145"/>
<dbReference type="KEGG" id="eco:b2158"/>
<dbReference type="KEGG" id="ecoc:C3026_12095"/>
<dbReference type="PATRIC" id="fig|1411691.4.peg.81"/>
<dbReference type="EchoBASE" id="EB1962"/>
<dbReference type="eggNOG" id="COG2855">
    <property type="taxonomic scope" value="Bacteria"/>
</dbReference>
<dbReference type="HOGENOM" id="CLU_033541_0_0_6"/>
<dbReference type="InParanoid" id="P62723"/>
<dbReference type="OMA" id="LTRALWI"/>
<dbReference type="OrthoDB" id="9805703at2"/>
<dbReference type="PhylomeDB" id="P62723"/>
<dbReference type="BioCyc" id="EcoCyc:EG12027-MONOMER"/>
<dbReference type="PRO" id="PR:P62723"/>
<dbReference type="Proteomes" id="UP000000625">
    <property type="component" value="Chromosome"/>
</dbReference>
<dbReference type="GO" id="GO:0005886">
    <property type="term" value="C:plasma membrane"/>
    <property type="evidence" value="ECO:0000314"/>
    <property type="project" value="EcoCyc"/>
</dbReference>
<dbReference type="InterPro" id="IPR018383">
    <property type="entry name" value="UPF0324_pro"/>
</dbReference>
<dbReference type="InterPro" id="IPR004630">
    <property type="entry name" value="UPF0324_YeiH-like"/>
</dbReference>
<dbReference type="NCBIfam" id="TIGR00698">
    <property type="entry name" value="YeiH family putative sulfate export transporter"/>
    <property type="match status" value="1"/>
</dbReference>
<dbReference type="PANTHER" id="PTHR30106">
    <property type="entry name" value="INNER MEMBRANE PROTEIN YEIH-RELATED"/>
    <property type="match status" value="1"/>
</dbReference>
<dbReference type="PANTHER" id="PTHR30106:SF2">
    <property type="entry name" value="UPF0324 INNER MEMBRANE PROTEIN YEIH"/>
    <property type="match status" value="1"/>
</dbReference>
<dbReference type="Pfam" id="PF03601">
    <property type="entry name" value="Cons_hypoth698"/>
    <property type="match status" value="1"/>
</dbReference>
<name>YEIH_ECOLI</name>
<accession>P62723</accession>
<accession>P33019</accession>
<accession>Q2MAS1</accession>
<protein>
    <recommendedName>
        <fullName>UPF0324 inner membrane protein YeiH</fullName>
    </recommendedName>
</protein>
<organism>
    <name type="scientific">Escherichia coli (strain K12)</name>
    <dbReference type="NCBI Taxonomy" id="83333"/>
    <lineage>
        <taxon>Bacteria</taxon>
        <taxon>Pseudomonadati</taxon>
        <taxon>Pseudomonadota</taxon>
        <taxon>Gammaproteobacteria</taxon>
        <taxon>Enterobacterales</taxon>
        <taxon>Enterobacteriaceae</taxon>
        <taxon>Escherichia</taxon>
    </lineage>
</organism>
<keyword id="KW-0002">3D-structure</keyword>
<keyword id="KW-0997">Cell inner membrane</keyword>
<keyword id="KW-1003">Cell membrane</keyword>
<keyword id="KW-0472">Membrane</keyword>
<keyword id="KW-1185">Reference proteome</keyword>
<keyword id="KW-0812">Transmembrane</keyword>
<keyword id="KW-1133">Transmembrane helix</keyword>
<sequence>MTNITLQKQHRTLWHFIPGLALSAVITGVALWGGSIPAVAGAGFSALTLAILLGMVLGNTIYPHIWKSCDGGVLFAKQYLLRLGIILYGFRLTFSQIADVGISGIIIDVLTLSSTFLLACFLGQKVFGLDKHTSWLIGAGSSICGAAAVLATEPVVKAEASKVTVAVATVVIFGTVAIFLYPAIYPLMSQWFSPETFGIYIGSTVHEVAQVVAAGHAISPDAENAAVISKMLRVMMLAPFLILLAARVKQLSGANSGEKSKITIPWFAILFIVVAIFNSFHLLPQSVVNMLVTLDTFLLAMAMAALGLTTHVSALKKAGAKPLLMALVLFAWLIVGGGAINYVIQSVIA</sequence>
<gene>
    <name type="primary">yeiH</name>
    <name type="ordered locus">b2158</name>
    <name type="ordered locus">JW2145</name>
</gene>
<reference key="1">
    <citation type="submission" date="1993-10" db="EMBL/GenBank/DDBJ databases">
        <title>Automated multiplex sequencing of the E.coli genome.</title>
        <authorList>
            <person name="Richterich P."/>
            <person name="Lakey N."/>
            <person name="Gryan G."/>
            <person name="Jaehn L."/>
            <person name="Mintz L."/>
            <person name="Robison K."/>
            <person name="Church G.M."/>
        </authorList>
    </citation>
    <scope>NUCLEOTIDE SEQUENCE [LARGE SCALE GENOMIC DNA]</scope>
    <source>
        <strain>K12 / BHB2600</strain>
    </source>
</reference>
<reference key="2">
    <citation type="journal article" date="1997" name="Science">
        <title>The complete genome sequence of Escherichia coli K-12.</title>
        <authorList>
            <person name="Blattner F.R."/>
            <person name="Plunkett G. III"/>
            <person name="Bloch C.A."/>
            <person name="Perna N.T."/>
            <person name="Burland V."/>
            <person name="Riley M."/>
            <person name="Collado-Vides J."/>
            <person name="Glasner J.D."/>
            <person name="Rode C.K."/>
            <person name="Mayhew G.F."/>
            <person name="Gregor J."/>
            <person name="Davis N.W."/>
            <person name="Kirkpatrick H.A."/>
            <person name="Goeden M.A."/>
            <person name="Rose D.J."/>
            <person name="Mau B."/>
            <person name="Shao Y."/>
        </authorList>
    </citation>
    <scope>NUCLEOTIDE SEQUENCE [LARGE SCALE GENOMIC DNA]</scope>
    <source>
        <strain>K12 / MG1655 / ATCC 47076</strain>
    </source>
</reference>
<reference key="3">
    <citation type="journal article" date="2006" name="Mol. Syst. Biol.">
        <title>Highly accurate genome sequences of Escherichia coli K-12 strains MG1655 and W3110.</title>
        <authorList>
            <person name="Hayashi K."/>
            <person name="Morooka N."/>
            <person name="Yamamoto Y."/>
            <person name="Fujita K."/>
            <person name="Isono K."/>
            <person name="Choi S."/>
            <person name="Ohtsubo E."/>
            <person name="Baba T."/>
            <person name="Wanner B.L."/>
            <person name="Mori H."/>
            <person name="Horiuchi T."/>
        </authorList>
    </citation>
    <scope>NUCLEOTIDE SEQUENCE [LARGE SCALE GENOMIC DNA]</scope>
    <source>
        <strain>K12 / W3110 / ATCC 27325 / DSM 5911</strain>
    </source>
</reference>
<reference key="4">
    <citation type="journal article" date="2005" name="Science">
        <title>Global topology analysis of the Escherichia coli inner membrane proteome.</title>
        <authorList>
            <person name="Daley D.O."/>
            <person name="Rapp M."/>
            <person name="Granseth E."/>
            <person name="Melen K."/>
            <person name="Drew D."/>
            <person name="von Heijne G."/>
        </authorList>
    </citation>
    <scope>TOPOLOGY [LARGE SCALE ANALYSIS]</scope>
    <source>
        <strain>K12 / MG1655 / ATCC 47076</strain>
    </source>
</reference>
<feature type="chain" id="PRO_0000157414" description="UPF0324 inner membrane protein YeiH">
    <location>
        <begin position="1"/>
        <end position="349"/>
    </location>
</feature>
<feature type="topological domain" description="Periplasmic" evidence="1">
    <location>
        <begin position="1"/>
        <end position="12"/>
    </location>
</feature>
<feature type="transmembrane region" description="Helical" evidence="1">
    <location>
        <begin position="13"/>
        <end position="32"/>
    </location>
</feature>
<feature type="topological domain" description="Cytoplasmic" evidence="1">
    <location>
        <begin position="33"/>
        <end position="35"/>
    </location>
</feature>
<feature type="transmembrane region" description="Helical" evidence="1">
    <location>
        <begin position="36"/>
        <end position="58"/>
    </location>
</feature>
<feature type="topological domain" description="Periplasmic" evidence="1">
    <location>
        <begin position="59"/>
        <end position="99"/>
    </location>
</feature>
<feature type="transmembrane region" description="Helical" evidence="1">
    <location>
        <begin position="100"/>
        <end position="122"/>
    </location>
</feature>
<feature type="topological domain" description="Cytoplasmic" evidence="1">
    <location>
        <begin position="123"/>
        <end position="131"/>
    </location>
</feature>
<feature type="transmembrane region" description="Helical" evidence="1">
    <location>
        <begin position="132"/>
        <end position="151"/>
    </location>
</feature>
<feature type="topological domain" description="Periplasmic" evidence="1">
    <location>
        <begin position="152"/>
        <end position="162"/>
    </location>
</feature>
<feature type="transmembrane region" description="Helical" evidence="1">
    <location>
        <begin position="163"/>
        <end position="185"/>
    </location>
</feature>
<feature type="topological domain" description="Cytoplasmic" evidence="1">
    <location>
        <begin position="186"/>
        <end position="261"/>
    </location>
</feature>
<feature type="transmembrane region" description="Helical" evidence="1">
    <location>
        <begin position="262"/>
        <end position="283"/>
    </location>
</feature>
<feature type="topological domain" description="Periplasmic" evidence="1">
    <location>
        <begin position="284"/>
        <end position="289"/>
    </location>
</feature>
<feature type="transmembrane region" description="Helical" evidence="1">
    <location>
        <begin position="290"/>
        <end position="312"/>
    </location>
</feature>
<feature type="topological domain" description="Cytoplasmic" evidence="1">
    <location>
        <begin position="313"/>
        <end position="321"/>
    </location>
</feature>
<feature type="transmembrane region" description="Helical" evidence="1">
    <location>
        <begin position="322"/>
        <end position="344"/>
    </location>
</feature>
<feature type="topological domain" description="Periplasmic" evidence="1">
    <location>
        <begin position="345"/>
        <end position="349"/>
    </location>
</feature>
<proteinExistence type="evidence at protein level"/>
<comment type="subcellular location">
    <subcellularLocation>
        <location>Cell inner membrane</location>
        <topology>Multi-pass membrane protein</topology>
    </subcellularLocation>
</comment>
<comment type="similarity">
    <text evidence="2">Belongs to the UPF0324 family.</text>
</comment>